<evidence type="ECO:0000255" key="1">
    <source>
        <dbReference type="HAMAP-Rule" id="MF_01578"/>
    </source>
</evidence>
<keyword id="KW-0028">Amino-acid biosynthesis</keyword>
<keyword id="KW-0057">Aromatic amino acid biosynthesis</keyword>
<keyword id="KW-0520">NAD</keyword>
<keyword id="KW-0521">NADP</keyword>
<keyword id="KW-0560">Oxidoreductase</keyword>
<name>YDIB_ECOSE</name>
<dbReference type="EC" id="1.1.1.282" evidence="1"/>
<dbReference type="EMBL" id="AP009240">
    <property type="protein sequence ID" value="BAG77339.1"/>
    <property type="molecule type" value="Genomic_DNA"/>
</dbReference>
<dbReference type="RefSeq" id="WP_000383460.1">
    <property type="nucleotide sequence ID" value="NC_011415.1"/>
</dbReference>
<dbReference type="SMR" id="B6IBD2"/>
<dbReference type="GeneID" id="75204539"/>
<dbReference type="KEGG" id="ecy:ECSE_1815"/>
<dbReference type="HOGENOM" id="CLU_044063_4_4_6"/>
<dbReference type="UniPathway" id="UPA00053">
    <property type="reaction ID" value="UER00087"/>
</dbReference>
<dbReference type="Proteomes" id="UP000008199">
    <property type="component" value="Chromosome"/>
</dbReference>
<dbReference type="GO" id="GO:0030266">
    <property type="term" value="F:quinate 3-dehydrogenase (NAD+) activity"/>
    <property type="evidence" value="ECO:0007669"/>
    <property type="project" value="UniProtKB-UniRule"/>
</dbReference>
<dbReference type="GO" id="GO:0052733">
    <property type="term" value="F:quinate 3-dehydrogenase (NADP+) activity"/>
    <property type="evidence" value="ECO:0007669"/>
    <property type="project" value="InterPro"/>
</dbReference>
<dbReference type="GO" id="GO:0052734">
    <property type="term" value="F:shikimate 3-dehydrogenase (NAD+) activity"/>
    <property type="evidence" value="ECO:0007669"/>
    <property type="project" value="InterPro"/>
</dbReference>
<dbReference type="GO" id="GO:0004764">
    <property type="term" value="F:shikimate 3-dehydrogenase (NADP+) activity"/>
    <property type="evidence" value="ECO:0007669"/>
    <property type="project" value="UniProtKB-UniRule"/>
</dbReference>
<dbReference type="GO" id="GO:0008652">
    <property type="term" value="P:amino acid biosynthetic process"/>
    <property type="evidence" value="ECO:0007669"/>
    <property type="project" value="UniProtKB-KW"/>
</dbReference>
<dbReference type="GO" id="GO:0009073">
    <property type="term" value="P:aromatic amino acid family biosynthetic process"/>
    <property type="evidence" value="ECO:0007669"/>
    <property type="project" value="UniProtKB-KW"/>
</dbReference>
<dbReference type="GO" id="GO:0009423">
    <property type="term" value="P:chorismate biosynthetic process"/>
    <property type="evidence" value="ECO:0007669"/>
    <property type="project" value="UniProtKB-UniRule"/>
</dbReference>
<dbReference type="GO" id="GO:0019632">
    <property type="term" value="P:shikimate metabolic process"/>
    <property type="evidence" value="ECO:0007669"/>
    <property type="project" value="TreeGrafter"/>
</dbReference>
<dbReference type="CDD" id="cd01065">
    <property type="entry name" value="NAD_bind_Shikimate_DH"/>
    <property type="match status" value="1"/>
</dbReference>
<dbReference type="FunFam" id="3.40.50.10860:FF:000004">
    <property type="entry name" value="Quinate/shikimate dehydrogenase"/>
    <property type="match status" value="1"/>
</dbReference>
<dbReference type="FunFam" id="3.40.50.720:FF:000086">
    <property type="entry name" value="Quinate/shikimate dehydrogenase"/>
    <property type="match status" value="1"/>
</dbReference>
<dbReference type="Gene3D" id="3.40.50.10860">
    <property type="entry name" value="Leucine Dehydrogenase, chain A, domain 1"/>
    <property type="match status" value="1"/>
</dbReference>
<dbReference type="Gene3D" id="3.40.50.720">
    <property type="entry name" value="NAD(P)-binding Rossmann-like Domain"/>
    <property type="match status" value="1"/>
</dbReference>
<dbReference type="HAMAP" id="MF_00222">
    <property type="entry name" value="Shikimate_DH_AroE"/>
    <property type="match status" value="1"/>
</dbReference>
<dbReference type="HAMAP" id="MF_01578">
    <property type="entry name" value="Shikimate_DH_YdiB"/>
    <property type="match status" value="1"/>
</dbReference>
<dbReference type="InterPro" id="IPR046346">
    <property type="entry name" value="Aminoacid_DH-like_N_sf"/>
</dbReference>
<dbReference type="InterPro" id="IPR036291">
    <property type="entry name" value="NAD(P)-bd_dom_sf"/>
</dbReference>
<dbReference type="InterPro" id="IPR022872">
    <property type="entry name" value="Quinate/Shikimate_DH"/>
</dbReference>
<dbReference type="InterPro" id="IPR041121">
    <property type="entry name" value="SDH_C"/>
</dbReference>
<dbReference type="InterPro" id="IPR013708">
    <property type="entry name" value="Shikimate_DH-bd_N"/>
</dbReference>
<dbReference type="InterPro" id="IPR022893">
    <property type="entry name" value="Shikimate_DH_fam"/>
</dbReference>
<dbReference type="NCBIfam" id="NF009390">
    <property type="entry name" value="PRK12749.1"/>
    <property type="match status" value="1"/>
</dbReference>
<dbReference type="PANTHER" id="PTHR21089:SF1">
    <property type="entry name" value="BIFUNCTIONAL 3-DEHYDROQUINATE DEHYDRATASE_SHIKIMATE DEHYDROGENASE, CHLOROPLASTIC"/>
    <property type="match status" value="1"/>
</dbReference>
<dbReference type="PANTHER" id="PTHR21089">
    <property type="entry name" value="SHIKIMATE DEHYDROGENASE"/>
    <property type="match status" value="1"/>
</dbReference>
<dbReference type="Pfam" id="PF18317">
    <property type="entry name" value="SDH_C"/>
    <property type="match status" value="1"/>
</dbReference>
<dbReference type="Pfam" id="PF08501">
    <property type="entry name" value="Shikimate_dh_N"/>
    <property type="match status" value="1"/>
</dbReference>
<dbReference type="SUPFAM" id="SSF53223">
    <property type="entry name" value="Aminoacid dehydrogenase-like, N-terminal domain"/>
    <property type="match status" value="1"/>
</dbReference>
<dbReference type="SUPFAM" id="SSF51735">
    <property type="entry name" value="NAD(P)-binding Rossmann-fold domains"/>
    <property type="match status" value="1"/>
</dbReference>
<proteinExistence type="inferred from homology"/>
<comment type="function">
    <text evidence="1">The actual biological function of YdiB remains unclear, nor is it known whether 3-dehydroshikimate or quinate represents the natural substrate. Catalyzes the reversible NAD-dependent reduction of both 3-dehydroshikimate (DHSA) and 3-dehydroquinate to yield shikimate (SA) and quinate, respectively. It can use both NAD or NADP for catalysis, however it has higher catalytic efficiency with NAD.</text>
</comment>
<comment type="catalytic activity">
    <reaction evidence="1">
        <text>L-quinate + NAD(+) = 3-dehydroquinate + NADH + H(+)</text>
        <dbReference type="Rhea" id="RHEA:22364"/>
        <dbReference type="ChEBI" id="CHEBI:15378"/>
        <dbReference type="ChEBI" id="CHEBI:29751"/>
        <dbReference type="ChEBI" id="CHEBI:32364"/>
        <dbReference type="ChEBI" id="CHEBI:57540"/>
        <dbReference type="ChEBI" id="CHEBI:57945"/>
        <dbReference type="EC" id="1.1.1.282"/>
    </reaction>
</comment>
<comment type="catalytic activity">
    <reaction evidence="1">
        <text>L-quinate + NADP(+) = 3-dehydroquinate + NADPH + H(+)</text>
        <dbReference type="Rhea" id="RHEA:18425"/>
        <dbReference type="ChEBI" id="CHEBI:15378"/>
        <dbReference type="ChEBI" id="CHEBI:29751"/>
        <dbReference type="ChEBI" id="CHEBI:32364"/>
        <dbReference type="ChEBI" id="CHEBI:57783"/>
        <dbReference type="ChEBI" id="CHEBI:58349"/>
        <dbReference type="EC" id="1.1.1.282"/>
    </reaction>
</comment>
<comment type="catalytic activity">
    <reaction evidence="1">
        <text>shikimate + NADP(+) = 3-dehydroshikimate + NADPH + H(+)</text>
        <dbReference type="Rhea" id="RHEA:17737"/>
        <dbReference type="ChEBI" id="CHEBI:15378"/>
        <dbReference type="ChEBI" id="CHEBI:16630"/>
        <dbReference type="ChEBI" id="CHEBI:36208"/>
        <dbReference type="ChEBI" id="CHEBI:57783"/>
        <dbReference type="ChEBI" id="CHEBI:58349"/>
        <dbReference type="EC" id="1.1.1.282"/>
    </reaction>
</comment>
<comment type="catalytic activity">
    <reaction evidence="1">
        <text>shikimate + NAD(+) = 3-dehydroshikimate + NADH + H(+)</text>
        <dbReference type="Rhea" id="RHEA:17741"/>
        <dbReference type="ChEBI" id="CHEBI:15378"/>
        <dbReference type="ChEBI" id="CHEBI:16630"/>
        <dbReference type="ChEBI" id="CHEBI:36208"/>
        <dbReference type="ChEBI" id="CHEBI:57540"/>
        <dbReference type="ChEBI" id="CHEBI:57945"/>
        <dbReference type="EC" id="1.1.1.282"/>
    </reaction>
</comment>
<comment type="pathway">
    <text evidence="1">Metabolic intermediate biosynthesis; chorismate biosynthesis; chorismate from D-erythrose 4-phosphate and phosphoenolpyruvate: step 4/7.</text>
</comment>
<comment type="subunit">
    <text evidence="1">Homodimer.</text>
</comment>
<comment type="similarity">
    <text evidence="1">Belongs to the shikimate dehydrogenase family.</text>
</comment>
<organism>
    <name type="scientific">Escherichia coli (strain SE11)</name>
    <dbReference type="NCBI Taxonomy" id="409438"/>
    <lineage>
        <taxon>Bacteria</taxon>
        <taxon>Pseudomonadati</taxon>
        <taxon>Pseudomonadota</taxon>
        <taxon>Gammaproteobacteria</taxon>
        <taxon>Enterobacterales</taxon>
        <taxon>Enterobacteriaceae</taxon>
        <taxon>Escherichia</taxon>
    </lineage>
</organism>
<protein>
    <recommendedName>
        <fullName evidence="1">Quinate/shikimate dehydrogenase</fullName>
        <ecNumber evidence="1">1.1.1.282</ecNumber>
    </recommendedName>
    <alternativeName>
        <fullName evidence="1">NAD-dependent shikimate 5-dehydrogenase</fullName>
    </alternativeName>
</protein>
<reference key="1">
    <citation type="journal article" date="2008" name="DNA Res.">
        <title>Complete genome sequence and comparative analysis of the wild-type commensal Escherichia coli strain SE11 isolated from a healthy adult.</title>
        <authorList>
            <person name="Oshima K."/>
            <person name="Toh H."/>
            <person name="Ogura Y."/>
            <person name="Sasamoto H."/>
            <person name="Morita H."/>
            <person name="Park S.-H."/>
            <person name="Ooka T."/>
            <person name="Iyoda S."/>
            <person name="Taylor T.D."/>
            <person name="Hayashi T."/>
            <person name="Itoh K."/>
            <person name="Hattori M."/>
        </authorList>
    </citation>
    <scope>NUCLEOTIDE SEQUENCE [LARGE SCALE GENOMIC DNA]</scope>
    <source>
        <strain>SE11</strain>
    </source>
</reference>
<gene>
    <name evidence="1" type="primary">ydiB</name>
    <name type="ordered locus">ECSE_1815</name>
</gene>
<feature type="chain" id="PRO_1000147553" description="Quinate/shikimate dehydrogenase">
    <location>
        <begin position="1"/>
        <end position="288"/>
    </location>
</feature>
<feature type="binding site" evidence="1">
    <location>
        <position position="71"/>
    </location>
    <ligand>
        <name>substrate</name>
    </ligand>
</feature>
<feature type="binding site" evidence="1">
    <location>
        <position position="107"/>
    </location>
    <ligand>
        <name>substrate</name>
    </ligand>
</feature>
<feature type="binding site" evidence="1">
    <location>
        <begin position="132"/>
        <end position="135"/>
    </location>
    <ligand>
        <name>NAD(+)</name>
        <dbReference type="ChEBI" id="CHEBI:57540"/>
    </ligand>
</feature>
<feature type="binding site" evidence="1">
    <location>
        <begin position="155"/>
        <end position="158"/>
    </location>
    <ligand>
        <name>NAD(+)</name>
        <dbReference type="ChEBI" id="CHEBI:57540"/>
    </ligand>
</feature>
<feature type="binding site" evidence="1">
    <location>
        <position position="205"/>
    </location>
    <ligand>
        <name>NAD(+)</name>
        <dbReference type="ChEBI" id="CHEBI:57540"/>
    </ligand>
</feature>
<feature type="binding site" evidence="1">
    <location>
        <begin position="232"/>
        <end position="235"/>
    </location>
    <ligand>
        <name>NAD(+)</name>
        <dbReference type="ChEBI" id="CHEBI:57540"/>
    </ligand>
</feature>
<feature type="binding site" evidence="1">
    <location>
        <position position="255"/>
    </location>
    <ligand>
        <name>NAD(+)</name>
        <dbReference type="ChEBI" id="CHEBI:57540"/>
    </ligand>
</feature>
<sequence>MDVTAKYELIGLMAYPIRHSLSPEMQNKALEKAGLPFTYMAFEVDNDSFPGAIEGLKALKMRGTGISMPNKQLACEYVDELTPAAKLVGAINTIVNDDGYLRGYNTDGTGHIRAIKESGFDIKGKTMVLLGAGGASTAIGAQGAIEGLKEIKLFNRRDEFFDKALAFAQRVNENTDCVVTVTDLADQQAFAEALASADILTNGTKVGMKPLENESLVNDISLLHPGLLVTECVYNPHMTKLLQQAQQAGCKTIDGYGMLLWQGAEQFTLWTGKDFPLEYVKQVMGFGA</sequence>
<accession>B6IBD2</accession>